<feature type="chain" id="PRO_0000244249" description="Large ribosomal subunit protein bL25">
    <location>
        <begin position="1"/>
        <end position="178"/>
    </location>
</feature>
<protein>
    <recommendedName>
        <fullName evidence="1">Large ribosomal subunit protein bL25</fullName>
    </recommendedName>
    <alternativeName>
        <fullName evidence="2">50S ribosomal protein L25</fullName>
    </alternativeName>
    <alternativeName>
        <fullName evidence="1">General stress protein CTC</fullName>
    </alternativeName>
</protein>
<sequence>MLEGIIRESIGKKGTKALRRDGYLIANIYGKGLQNLHAAFKENEYIRTVRNKETLSFPIKVDSKEMNVVVQAYEAHPVTGKLLHVDLMVAQPNVVTHYHVPVVTEGDAIGLKNKGLIHISKPRLRVKATIENTPNSIVVDVTKMDVGDAKMVRDIAKIANVTFTDADRVSVLSVIKAK</sequence>
<name>RL25_SULDN</name>
<keyword id="KW-1185">Reference proteome</keyword>
<keyword id="KW-0687">Ribonucleoprotein</keyword>
<keyword id="KW-0689">Ribosomal protein</keyword>
<keyword id="KW-0694">RNA-binding</keyword>
<keyword id="KW-0699">rRNA-binding</keyword>
<accession>Q30TD5</accession>
<dbReference type="EMBL" id="CP000153">
    <property type="protein sequence ID" value="ABB43746.1"/>
    <property type="molecule type" value="Genomic_DNA"/>
</dbReference>
<dbReference type="RefSeq" id="WP_011372100.1">
    <property type="nucleotide sequence ID" value="NC_007575.1"/>
</dbReference>
<dbReference type="SMR" id="Q30TD5"/>
<dbReference type="STRING" id="326298.Suden_0465"/>
<dbReference type="KEGG" id="tdn:Suden_0465"/>
<dbReference type="eggNOG" id="COG1825">
    <property type="taxonomic scope" value="Bacteria"/>
</dbReference>
<dbReference type="HOGENOM" id="CLU_075939_2_2_7"/>
<dbReference type="OrthoDB" id="5339138at2"/>
<dbReference type="Proteomes" id="UP000002714">
    <property type="component" value="Chromosome"/>
</dbReference>
<dbReference type="GO" id="GO:0022625">
    <property type="term" value="C:cytosolic large ribosomal subunit"/>
    <property type="evidence" value="ECO:0007669"/>
    <property type="project" value="TreeGrafter"/>
</dbReference>
<dbReference type="GO" id="GO:0008097">
    <property type="term" value="F:5S rRNA binding"/>
    <property type="evidence" value="ECO:0007669"/>
    <property type="project" value="InterPro"/>
</dbReference>
<dbReference type="GO" id="GO:0003735">
    <property type="term" value="F:structural constituent of ribosome"/>
    <property type="evidence" value="ECO:0007669"/>
    <property type="project" value="InterPro"/>
</dbReference>
<dbReference type="GO" id="GO:0006412">
    <property type="term" value="P:translation"/>
    <property type="evidence" value="ECO:0007669"/>
    <property type="project" value="UniProtKB-UniRule"/>
</dbReference>
<dbReference type="CDD" id="cd00495">
    <property type="entry name" value="Ribosomal_L25_TL5_CTC"/>
    <property type="match status" value="1"/>
</dbReference>
<dbReference type="Gene3D" id="2.170.120.20">
    <property type="entry name" value="Ribosomal protein L25, beta domain"/>
    <property type="match status" value="1"/>
</dbReference>
<dbReference type="Gene3D" id="2.40.240.10">
    <property type="entry name" value="Ribosomal Protein L25, Chain P"/>
    <property type="match status" value="1"/>
</dbReference>
<dbReference type="HAMAP" id="MF_01334">
    <property type="entry name" value="Ribosomal_bL25_CTC"/>
    <property type="match status" value="1"/>
</dbReference>
<dbReference type="InterPro" id="IPR020056">
    <property type="entry name" value="Rbsml_bL25/Gln-tRNA_synth_N"/>
</dbReference>
<dbReference type="InterPro" id="IPR011035">
    <property type="entry name" value="Ribosomal_bL25/Gln-tRNA_synth"/>
</dbReference>
<dbReference type="InterPro" id="IPR020057">
    <property type="entry name" value="Ribosomal_bL25_b-dom"/>
</dbReference>
<dbReference type="InterPro" id="IPR037121">
    <property type="entry name" value="Ribosomal_bL25_C"/>
</dbReference>
<dbReference type="InterPro" id="IPR001021">
    <property type="entry name" value="Ribosomal_bL25_long"/>
</dbReference>
<dbReference type="InterPro" id="IPR029751">
    <property type="entry name" value="Ribosomal_L25_dom"/>
</dbReference>
<dbReference type="InterPro" id="IPR020930">
    <property type="entry name" value="Ribosomal_uL5_bac-type"/>
</dbReference>
<dbReference type="NCBIfam" id="TIGR00731">
    <property type="entry name" value="bL25_bact_ctc"/>
    <property type="match status" value="1"/>
</dbReference>
<dbReference type="NCBIfam" id="NF004129">
    <property type="entry name" value="PRK05618.1-4"/>
    <property type="match status" value="1"/>
</dbReference>
<dbReference type="PANTHER" id="PTHR33284">
    <property type="entry name" value="RIBOSOMAL PROTEIN L25/GLN-TRNA SYNTHETASE, ANTI-CODON-BINDING DOMAIN-CONTAINING PROTEIN"/>
    <property type="match status" value="1"/>
</dbReference>
<dbReference type="PANTHER" id="PTHR33284:SF1">
    <property type="entry name" value="RIBOSOMAL PROTEIN L25_GLN-TRNA SYNTHETASE, ANTI-CODON-BINDING DOMAIN-CONTAINING PROTEIN"/>
    <property type="match status" value="1"/>
</dbReference>
<dbReference type="Pfam" id="PF01386">
    <property type="entry name" value="Ribosomal_L25p"/>
    <property type="match status" value="1"/>
</dbReference>
<dbReference type="Pfam" id="PF14693">
    <property type="entry name" value="Ribosomal_TL5_C"/>
    <property type="match status" value="1"/>
</dbReference>
<dbReference type="SUPFAM" id="SSF50715">
    <property type="entry name" value="Ribosomal protein L25-like"/>
    <property type="match status" value="1"/>
</dbReference>
<evidence type="ECO:0000255" key="1">
    <source>
        <dbReference type="HAMAP-Rule" id="MF_01334"/>
    </source>
</evidence>
<evidence type="ECO:0000305" key="2"/>
<organism>
    <name type="scientific">Sulfurimonas denitrificans (strain ATCC 33889 / DSM 1251)</name>
    <name type="common">Thiomicrospira denitrificans (strain ATCC 33889 / DSM 1251)</name>
    <dbReference type="NCBI Taxonomy" id="326298"/>
    <lineage>
        <taxon>Bacteria</taxon>
        <taxon>Pseudomonadati</taxon>
        <taxon>Campylobacterota</taxon>
        <taxon>Epsilonproteobacteria</taxon>
        <taxon>Campylobacterales</taxon>
        <taxon>Sulfurimonadaceae</taxon>
        <taxon>Sulfurimonas</taxon>
    </lineage>
</organism>
<gene>
    <name evidence="1" type="primary">rplY</name>
    <name evidence="1" type="synonym">ctc</name>
    <name type="ordered locus">Suden_0465</name>
</gene>
<comment type="function">
    <text evidence="1">This is one of the proteins that binds to the 5S RNA in the ribosome where it forms part of the central protuberance.</text>
</comment>
<comment type="subunit">
    <text evidence="1">Part of the 50S ribosomal subunit; part of the 5S rRNA/L5/L18/L25 subcomplex. Contacts the 5S rRNA. Binds to the 5S rRNA independently of L5 and L18.</text>
</comment>
<comment type="similarity">
    <text evidence="1">Belongs to the bacterial ribosomal protein bL25 family. CTC subfamily.</text>
</comment>
<proteinExistence type="inferred from homology"/>
<reference key="1">
    <citation type="journal article" date="2008" name="Appl. Environ. Microbiol.">
        <title>Genome of the epsilonproteobacterial chemolithoautotroph Sulfurimonas denitrificans.</title>
        <authorList>
            <person name="Sievert S.M."/>
            <person name="Scott K.M."/>
            <person name="Klotz M.G."/>
            <person name="Chain P.S.G."/>
            <person name="Hauser L.J."/>
            <person name="Hemp J."/>
            <person name="Huegler M."/>
            <person name="Land M."/>
            <person name="Lapidus A."/>
            <person name="Larimer F.W."/>
            <person name="Lucas S."/>
            <person name="Malfatti S.A."/>
            <person name="Meyer F."/>
            <person name="Paulsen I.T."/>
            <person name="Ren Q."/>
            <person name="Simon J."/>
            <person name="Bailey K."/>
            <person name="Diaz E."/>
            <person name="Fitzpatrick K.A."/>
            <person name="Glover B."/>
            <person name="Gwatney N."/>
            <person name="Korajkic A."/>
            <person name="Long A."/>
            <person name="Mobberley J.M."/>
            <person name="Pantry S.N."/>
            <person name="Pazder G."/>
            <person name="Peterson S."/>
            <person name="Quintanilla J.D."/>
            <person name="Sprinkle R."/>
            <person name="Stephens J."/>
            <person name="Thomas P."/>
            <person name="Vaughn R."/>
            <person name="Weber M.J."/>
            <person name="Wooten L.L."/>
        </authorList>
    </citation>
    <scope>NUCLEOTIDE SEQUENCE [LARGE SCALE GENOMIC DNA]</scope>
    <source>
        <strain>ATCC 33889 / DSM 1251</strain>
    </source>
</reference>